<accession>Q9SVA3</accession>
<keyword id="KW-0880">Kelch repeat</keyword>
<keyword id="KW-1185">Reference proteome</keyword>
<keyword id="KW-0677">Repeat</keyword>
<keyword id="KW-0833">Ubl conjugation pathway</keyword>
<evidence type="ECO:0000250" key="1"/>
<evidence type="ECO:0000256" key="2">
    <source>
        <dbReference type="SAM" id="MobiDB-lite"/>
    </source>
</evidence>
<evidence type="ECO:0000269" key="3">
    <source>
    </source>
</evidence>
<reference key="1">
    <citation type="journal article" date="1999" name="Nature">
        <title>Sequence and analysis of chromosome 4 of the plant Arabidopsis thaliana.</title>
        <authorList>
            <person name="Mayer K.F.X."/>
            <person name="Schueller C."/>
            <person name="Wambutt R."/>
            <person name="Murphy G."/>
            <person name="Volckaert G."/>
            <person name="Pohl T."/>
            <person name="Duesterhoeft A."/>
            <person name="Stiekema W."/>
            <person name="Entian K.-D."/>
            <person name="Terryn N."/>
            <person name="Harris B."/>
            <person name="Ansorge W."/>
            <person name="Brandt P."/>
            <person name="Grivell L.A."/>
            <person name="Rieger M."/>
            <person name="Weichselgartner M."/>
            <person name="de Simone V."/>
            <person name="Obermaier B."/>
            <person name="Mache R."/>
            <person name="Mueller M."/>
            <person name="Kreis M."/>
            <person name="Delseny M."/>
            <person name="Puigdomenech P."/>
            <person name="Watson M."/>
            <person name="Schmidtheini T."/>
            <person name="Reichert B."/>
            <person name="Portetelle D."/>
            <person name="Perez-Alonso M."/>
            <person name="Boutry M."/>
            <person name="Bancroft I."/>
            <person name="Vos P."/>
            <person name="Hoheisel J."/>
            <person name="Zimmermann W."/>
            <person name="Wedler H."/>
            <person name="Ridley P."/>
            <person name="Langham S.-A."/>
            <person name="McCullagh B."/>
            <person name="Bilham L."/>
            <person name="Robben J."/>
            <person name="van der Schueren J."/>
            <person name="Grymonprez B."/>
            <person name="Chuang Y.-J."/>
            <person name="Vandenbussche F."/>
            <person name="Braeken M."/>
            <person name="Weltjens I."/>
            <person name="Voet M."/>
            <person name="Bastiaens I."/>
            <person name="Aert R."/>
            <person name="Defoor E."/>
            <person name="Weitzenegger T."/>
            <person name="Bothe G."/>
            <person name="Ramsperger U."/>
            <person name="Hilbert H."/>
            <person name="Braun M."/>
            <person name="Holzer E."/>
            <person name="Brandt A."/>
            <person name="Peters S."/>
            <person name="van Staveren M."/>
            <person name="Dirkse W."/>
            <person name="Mooijman P."/>
            <person name="Klein Lankhorst R."/>
            <person name="Rose M."/>
            <person name="Hauf J."/>
            <person name="Koetter P."/>
            <person name="Berneiser S."/>
            <person name="Hempel S."/>
            <person name="Feldpausch M."/>
            <person name="Lamberth S."/>
            <person name="Van den Daele H."/>
            <person name="De Keyser A."/>
            <person name="Buysshaert C."/>
            <person name="Gielen J."/>
            <person name="Villarroel R."/>
            <person name="De Clercq R."/>
            <person name="van Montagu M."/>
            <person name="Rogers J."/>
            <person name="Cronin A."/>
            <person name="Quail M.A."/>
            <person name="Bray-Allen S."/>
            <person name="Clark L."/>
            <person name="Doggett J."/>
            <person name="Hall S."/>
            <person name="Kay M."/>
            <person name="Lennard N."/>
            <person name="McLay K."/>
            <person name="Mayes R."/>
            <person name="Pettett A."/>
            <person name="Rajandream M.A."/>
            <person name="Lyne M."/>
            <person name="Benes V."/>
            <person name="Rechmann S."/>
            <person name="Borkova D."/>
            <person name="Bloecker H."/>
            <person name="Scharfe M."/>
            <person name="Grimm M."/>
            <person name="Loehnert T.-H."/>
            <person name="Dose S."/>
            <person name="de Haan M."/>
            <person name="Maarse A.C."/>
            <person name="Schaefer M."/>
            <person name="Mueller-Auer S."/>
            <person name="Gabel C."/>
            <person name="Fuchs M."/>
            <person name="Fartmann B."/>
            <person name="Granderath K."/>
            <person name="Dauner D."/>
            <person name="Herzl A."/>
            <person name="Neumann S."/>
            <person name="Argiriou A."/>
            <person name="Vitale D."/>
            <person name="Liguori R."/>
            <person name="Piravandi E."/>
            <person name="Massenet O."/>
            <person name="Quigley F."/>
            <person name="Clabauld G."/>
            <person name="Muendlein A."/>
            <person name="Felber R."/>
            <person name="Schnabl S."/>
            <person name="Hiller R."/>
            <person name="Schmidt W."/>
            <person name="Lecharny A."/>
            <person name="Aubourg S."/>
            <person name="Chefdor F."/>
            <person name="Cooke R."/>
            <person name="Berger C."/>
            <person name="Monfort A."/>
            <person name="Casacuberta E."/>
            <person name="Gibbons T."/>
            <person name="Weber N."/>
            <person name="Vandenbol M."/>
            <person name="Bargues M."/>
            <person name="Terol J."/>
            <person name="Torres A."/>
            <person name="Perez-Perez A."/>
            <person name="Purnelle B."/>
            <person name="Bent E."/>
            <person name="Johnson S."/>
            <person name="Tacon D."/>
            <person name="Jesse T."/>
            <person name="Heijnen L."/>
            <person name="Schwarz S."/>
            <person name="Scholler P."/>
            <person name="Heber S."/>
            <person name="Francs P."/>
            <person name="Bielke C."/>
            <person name="Frishman D."/>
            <person name="Haase D."/>
            <person name="Lemcke K."/>
            <person name="Mewes H.-W."/>
            <person name="Stocker S."/>
            <person name="Zaccaria P."/>
            <person name="Bevan M."/>
            <person name="Wilson R.K."/>
            <person name="de la Bastide M."/>
            <person name="Habermann K."/>
            <person name="Parnell L."/>
            <person name="Dedhia N."/>
            <person name="Gnoj L."/>
            <person name="Schutz K."/>
            <person name="Huang E."/>
            <person name="Spiegel L."/>
            <person name="Sekhon M."/>
            <person name="Murray J."/>
            <person name="Sheet P."/>
            <person name="Cordes M."/>
            <person name="Abu-Threideh J."/>
            <person name="Stoneking T."/>
            <person name="Kalicki J."/>
            <person name="Graves T."/>
            <person name="Harmon G."/>
            <person name="Edwards J."/>
            <person name="Latreille P."/>
            <person name="Courtney L."/>
            <person name="Cloud J."/>
            <person name="Abbott A."/>
            <person name="Scott K."/>
            <person name="Johnson D."/>
            <person name="Minx P."/>
            <person name="Bentley D."/>
            <person name="Fulton B."/>
            <person name="Miller N."/>
            <person name="Greco T."/>
            <person name="Kemp K."/>
            <person name="Kramer J."/>
            <person name="Fulton L."/>
            <person name="Mardis E."/>
            <person name="Dante M."/>
            <person name="Pepin K."/>
            <person name="Hillier L.W."/>
            <person name="Nelson J."/>
            <person name="Spieth J."/>
            <person name="Ryan E."/>
            <person name="Andrews S."/>
            <person name="Geisel C."/>
            <person name="Layman D."/>
            <person name="Du H."/>
            <person name="Ali J."/>
            <person name="Berghoff A."/>
            <person name="Jones K."/>
            <person name="Drone K."/>
            <person name="Cotton M."/>
            <person name="Joshu C."/>
            <person name="Antonoiu B."/>
            <person name="Zidanic M."/>
            <person name="Strong C."/>
            <person name="Sun H."/>
            <person name="Lamar B."/>
            <person name="Yordan C."/>
            <person name="Ma P."/>
            <person name="Zhong J."/>
            <person name="Preston R."/>
            <person name="Vil D."/>
            <person name="Shekher M."/>
            <person name="Matero A."/>
            <person name="Shah R."/>
            <person name="Swaby I.K."/>
            <person name="O'Shaughnessy A."/>
            <person name="Rodriguez M."/>
            <person name="Hoffman J."/>
            <person name="Till S."/>
            <person name="Granat S."/>
            <person name="Shohdy N."/>
            <person name="Hasegawa A."/>
            <person name="Hameed A."/>
            <person name="Lodhi M."/>
            <person name="Johnson A."/>
            <person name="Chen E."/>
            <person name="Marra M.A."/>
            <person name="Martienssen R."/>
            <person name="McCombie W.R."/>
        </authorList>
    </citation>
    <scope>NUCLEOTIDE SEQUENCE [LARGE SCALE GENOMIC DNA]</scope>
    <source>
        <strain>cv. Columbia</strain>
    </source>
</reference>
<reference key="2">
    <citation type="journal article" date="2017" name="Plant J.">
        <title>Araport11: a complete reannotation of the Arabidopsis thaliana reference genome.</title>
        <authorList>
            <person name="Cheng C.Y."/>
            <person name="Krishnakumar V."/>
            <person name="Chan A.P."/>
            <person name="Thibaud-Nissen F."/>
            <person name="Schobel S."/>
            <person name="Town C.D."/>
        </authorList>
    </citation>
    <scope>GENOME REANNOTATION</scope>
    <source>
        <strain>cv. Columbia</strain>
    </source>
</reference>
<reference key="3">
    <citation type="journal article" date="2003" name="Science">
        <title>Empirical analysis of transcriptional activity in the Arabidopsis genome.</title>
        <authorList>
            <person name="Yamada K."/>
            <person name="Lim J."/>
            <person name="Dale J.M."/>
            <person name="Chen H."/>
            <person name="Shinn P."/>
            <person name="Palm C.J."/>
            <person name="Southwick A.M."/>
            <person name="Wu H.C."/>
            <person name="Kim C.J."/>
            <person name="Nguyen M."/>
            <person name="Pham P.K."/>
            <person name="Cheuk R.F."/>
            <person name="Karlin-Newmann G."/>
            <person name="Liu S.X."/>
            <person name="Lam B."/>
            <person name="Sakano H."/>
            <person name="Wu T."/>
            <person name="Yu G."/>
            <person name="Miranda M."/>
            <person name="Quach H.L."/>
            <person name="Tripp M."/>
            <person name="Chang C.H."/>
            <person name="Lee J.M."/>
            <person name="Toriumi M.J."/>
            <person name="Chan M.M."/>
            <person name="Tang C.C."/>
            <person name="Onodera C.S."/>
            <person name="Deng J.M."/>
            <person name="Akiyama K."/>
            <person name="Ansari Y."/>
            <person name="Arakawa T."/>
            <person name="Banh J."/>
            <person name="Banno F."/>
            <person name="Bowser L."/>
            <person name="Brooks S.Y."/>
            <person name="Carninci P."/>
            <person name="Chao Q."/>
            <person name="Choy N."/>
            <person name="Enju A."/>
            <person name="Goldsmith A.D."/>
            <person name="Gurjal M."/>
            <person name="Hansen N.F."/>
            <person name="Hayashizaki Y."/>
            <person name="Johnson-Hopson C."/>
            <person name="Hsuan V.W."/>
            <person name="Iida K."/>
            <person name="Karnes M."/>
            <person name="Khan S."/>
            <person name="Koesema E."/>
            <person name="Ishida J."/>
            <person name="Jiang P.X."/>
            <person name="Jones T."/>
            <person name="Kawai J."/>
            <person name="Kamiya A."/>
            <person name="Meyers C."/>
            <person name="Nakajima M."/>
            <person name="Narusaka M."/>
            <person name="Seki M."/>
            <person name="Sakurai T."/>
            <person name="Satou M."/>
            <person name="Tamse R."/>
            <person name="Vaysberg M."/>
            <person name="Wallender E.K."/>
            <person name="Wong C."/>
            <person name="Yamamura Y."/>
            <person name="Yuan S."/>
            <person name="Shinozaki K."/>
            <person name="Davis R.W."/>
            <person name="Theologis A."/>
            <person name="Ecker J.R."/>
        </authorList>
    </citation>
    <scope>NUCLEOTIDE SEQUENCE [LARGE SCALE MRNA]</scope>
    <source>
        <strain>cv. Columbia</strain>
    </source>
</reference>
<reference key="4">
    <citation type="submission" date="2006-07" db="EMBL/GenBank/DDBJ databases">
        <title>Large-scale analysis of RIKEN Arabidopsis full-length (RAFL) cDNAs.</title>
        <authorList>
            <person name="Totoki Y."/>
            <person name="Seki M."/>
            <person name="Ishida J."/>
            <person name="Nakajima M."/>
            <person name="Enju A."/>
            <person name="Kamiya A."/>
            <person name="Narusaka M."/>
            <person name="Shin-i T."/>
            <person name="Nakagawa M."/>
            <person name="Sakamoto N."/>
            <person name="Oishi K."/>
            <person name="Kohara Y."/>
            <person name="Kobayashi M."/>
            <person name="Toyoda A."/>
            <person name="Sakaki Y."/>
            <person name="Sakurai T."/>
            <person name="Iida K."/>
            <person name="Akiyama K."/>
            <person name="Satou M."/>
            <person name="Toyoda T."/>
            <person name="Konagaya A."/>
            <person name="Carninci P."/>
            <person name="Kawai J."/>
            <person name="Hayashizaki Y."/>
            <person name="Shinozaki K."/>
        </authorList>
    </citation>
    <scope>NUCLEOTIDE SEQUENCE [LARGE SCALE MRNA]</scope>
    <source>
        <strain>cv. Columbia</strain>
    </source>
</reference>
<reference key="5">
    <citation type="journal article" date="2004" name="Plant Cell Physiol.">
        <title>Expression and interaction analysis of Arabidopsis Skp1-related genes.</title>
        <authorList>
            <person name="Takahashi N."/>
            <person name="Kuroda H."/>
            <person name="Kuromori T."/>
            <person name="Hirayama T."/>
            <person name="Seki M."/>
            <person name="Shinozaki K."/>
            <person name="Shimada H."/>
            <person name="Matsui M."/>
        </authorList>
    </citation>
    <scope>INTERACTION WITH ASK13 AND ASK14</scope>
</reference>
<organism>
    <name type="scientific">Arabidopsis thaliana</name>
    <name type="common">Mouse-ear cress</name>
    <dbReference type="NCBI Taxonomy" id="3702"/>
    <lineage>
        <taxon>Eukaryota</taxon>
        <taxon>Viridiplantae</taxon>
        <taxon>Streptophyta</taxon>
        <taxon>Embryophyta</taxon>
        <taxon>Tracheophyta</taxon>
        <taxon>Spermatophyta</taxon>
        <taxon>Magnoliopsida</taxon>
        <taxon>eudicotyledons</taxon>
        <taxon>Gunneridae</taxon>
        <taxon>Pentapetalae</taxon>
        <taxon>rosids</taxon>
        <taxon>malvids</taxon>
        <taxon>Brassicales</taxon>
        <taxon>Brassicaceae</taxon>
        <taxon>Camelineae</taxon>
        <taxon>Arabidopsis</taxon>
    </lineage>
</organism>
<sequence>MSSPEKKRKTTKKPSPTPQSTTPNPSLPDDLVVSCLARVSRLYYPTLSLVSKSFRSLIASPDLYKTRSLLGRTESCLYVCLQEKDSDPNPRWFTLCLKPNRTLTNDITEKKKKKKKKKKMSSGYVLAAIPVLHSRPAYWSGLVAVGSNIYNIGGPIDKAHSSIVSVLDCQSHTWHEGPGMRVERRYPAANVVEGKIYVTGGCKDCSNSSNWMEVFDPRTQTWESVSSPGAEIGGCSIHKSAVVEGEILIANSHGLIYKPKEGRWERMKWDMDIGWVWYSYCVVENVLYYYYKGVFKWYDTMARLWRDLKGVKGLPRFARCGGKMADYGGKMAVFWDKIVTSDDGCKNKMILCAVIALERRNSEEIWGKVEWHDAVLTVPLSYEVVYALSPTV</sequence>
<protein>
    <recommendedName>
        <fullName>F-box/kelch-repeat protein At4g39550</fullName>
    </recommendedName>
</protein>
<feature type="chain" id="PRO_0000283256" description="F-box/kelch-repeat protein At4g39550">
    <location>
        <begin position="1"/>
        <end position="392"/>
    </location>
</feature>
<feature type="domain" description="F-box">
    <location>
        <begin position="21"/>
        <end position="67"/>
    </location>
</feature>
<feature type="repeat" description="Kelch 1">
    <location>
        <begin position="148"/>
        <end position="194"/>
    </location>
</feature>
<feature type="repeat" description="Kelch 2">
    <location>
        <begin position="195"/>
        <end position="242"/>
    </location>
</feature>
<feature type="repeat" description="Kelch 3">
    <location>
        <begin position="244"/>
        <end position="285"/>
    </location>
</feature>
<feature type="region of interest" description="Disordered" evidence="2">
    <location>
        <begin position="1"/>
        <end position="27"/>
    </location>
</feature>
<feature type="compositionally biased region" description="Basic residues" evidence="2">
    <location>
        <begin position="1"/>
        <end position="12"/>
    </location>
</feature>
<feature type="compositionally biased region" description="Low complexity" evidence="2">
    <location>
        <begin position="18"/>
        <end position="27"/>
    </location>
</feature>
<gene>
    <name type="ordered locus">At4g39550</name>
    <name type="ORF">F23K16.180</name>
</gene>
<proteinExistence type="evidence at protein level"/>
<comment type="function">
    <text evidence="1">Component of SCF(ASK-cullin-F-box) E3 ubiquitin ligase complexes, which may mediate the ubiquitination and subsequent proteasomal degradation of target proteins.</text>
</comment>
<comment type="pathway">
    <text>Protein modification; protein ubiquitination.</text>
</comment>
<comment type="subunit">
    <text evidence="1 3">Part of a SCF (ASK-cullin-F-box) protein ligase complex (By similarity). Interacts with ASK13 and ASK14.</text>
</comment>
<comment type="domain">
    <text evidence="1">The F-box is necessary for the interaction with ASK proteins.</text>
</comment>
<name>FBK98_ARATH</name>
<dbReference type="EMBL" id="AL078620">
    <property type="protein sequence ID" value="CAB44690.1"/>
    <property type="molecule type" value="Genomic_DNA"/>
</dbReference>
<dbReference type="EMBL" id="AL161595">
    <property type="protein sequence ID" value="CAB80618.1"/>
    <property type="molecule type" value="Genomic_DNA"/>
</dbReference>
<dbReference type="EMBL" id="CP002687">
    <property type="protein sequence ID" value="AEE87086.1"/>
    <property type="molecule type" value="Genomic_DNA"/>
</dbReference>
<dbReference type="EMBL" id="BT003146">
    <property type="protein sequence ID" value="AAO24578.1"/>
    <property type="molecule type" value="mRNA"/>
</dbReference>
<dbReference type="EMBL" id="AK228125">
    <property type="protein sequence ID" value="BAF00082.1"/>
    <property type="molecule type" value="mRNA"/>
</dbReference>
<dbReference type="PIR" id="T09371">
    <property type="entry name" value="T09371"/>
</dbReference>
<dbReference type="RefSeq" id="NP_195665.1">
    <property type="nucleotide sequence ID" value="NM_120115.4"/>
</dbReference>
<dbReference type="SMR" id="Q9SVA3"/>
<dbReference type="BioGRID" id="15389">
    <property type="interactions" value="2"/>
</dbReference>
<dbReference type="FunCoup" id="Q9SVA3">
    <property type="interactions" value="53"/>
</dbReference>
<dbReference type="IntAct" id="Q9SVA3">
    <property type="interactions" value="2"/>
</dbReference>
<dbReference type="GlyGen" id="Q9SVA3">
    <property type="glycosylation" value="1 site"/>
</dbReference>
<dbReference type="PaxDb" id="3702-AT4G39550.1"/>
<dbReference type="ProteomicsDB" id="230693"/>
<dbReference type="EnsemblPlants" id="AT4G39550.1">
    <property type="protein sequence ID" value="AT4G39550.1"/>
    <property type="gene ID" value="AT4G39550"/>
</dbReference>
<dbReference type="GeneID" id="830109"/>
<dbReference type="Gramene" id="AT4G39550.1">
    <property type="protein sequence ID" value="AT4G39550.1"/>
    <property type="gene ID" value="AT4G39550"/>
</dbReference>
<dbReference type="KEGG" id="ath:AT4G39550"/>
<dbReference type="Araport" id="AT4G39550"/>
<dbReference type="TAIR" id="AT4G39550"/>
<dbReference type="eggNOG" id="KOG1072">
    <property type="taxonomic scope" value="Eukaryota"/>
</dbReference>
<dbReference type="HOGENOM" id="CLU_032521_1_2_1"/>
<dbReference type="InParanoid" id="Q9SVA3"/>
<dbReference type="OMA" id="KMILCAV"/>
<dbReference type="PhylomeDB" id="Q9SVA3"/>
<dbReference type="UniPathway" id="UPA00143"/>
<dbReference type="PRO" id="PR:Q9SVA3"/>
<dbReference type="Proteomes" id="UP000006548">
    <property type="component" value="Chromosome 4"/>
</dbReference>
<dbReference type="ExpressionAtlas" id="Q9SVA3">
    <property type="expression patterns" value="baseline and differential"/>
</dbReference>
<dbReference type="GO" id="GO:0016567">
    <property type="term" value="P:protein ubiquitination"/>
    <property type="evidence" value="ECO:0007669"/>
    <property type="project" value="UniProtKB-UniPathway"/>
</dbReference>
<dbReference type="CDD" id="cd22152">
    <property type="entry name" value="F-box_AtAFR-like"/>
    <property type="match status" value="1"/>
</dbReference>
<dbReference type="Gene3D" id="2.120.10.80">
    <property type="entry name" value="Kelch-type beta propeller"/>
    <property type="match status" value="1"/>
</dbReference>
<dbReference type="InterPro" id="IPR036047">
    <property type="entry name" value="F-box-like_dom_sf"/>
</dbReference>
<dbReference type="InterPro" id="IPR050354">
    <property type="entry name" value="F-box/kelch-repeat_ARATH"/>
</dbReference>
<dbReference type="InterPro" id="IPR001810">
    <property type="entry name" value="F-box_dom"/>
</dbReference>
<dbReference type="InterPro" id="IPR015915">
    <property type="entry name" value="Kelch-typ_b-propeller"/>
</dbReference>
<dbReference type="InterPro" id="IPR006652">
    <property type="entry name" value="Kelch_1"/>
</dbReference>
<dbReference type="PANTHER" id="PTHR24414">
    <property type="entry name" value="F-BOX/KELCH-REPEAT PROTEIN SKIP4"/>
    <property type="match status" value="1"/>
</dbReference>
<dbReference type="PANTHER" id="PTHR24414:SF184">
    <property type="entry name" value="GALACTOSE OXIDASE_KELCH REPEAT SUPERFAMILY PROTEIN"/>
    <property type="match status" value="1"/>
</dbReference>
<dbReference type="Pfam" id="PF00646">
    <property type="entry name" value="F-box"/>
    <property type="match status" value="1"/>
</dbReference>
<dbReference type="Pfam" id="PF25210">
    <property type="entry name" value="Kelch_FKB95"/>
    <property type="match status" value="1"/>
</dbReference>
<dbReference type="SMART" id="SM00256">
    <property type="entry name" value="FBOX"/>
    <property type="match status" value="1"/>
</dbReference>
<dbReference type="SMART" id="SM00612">
    <property type="entry name" value="Kelch"/>
    <property type="match status" value="2"/>
</dbReference>
<dbReference type="SUPFAM" id="SSF81383">
    <property type="entry name" value="F-box domain"/>
    <property type="match status" value="1"/>
</dbReference>
<dbReference type="SUPFAM" id="SSF117281">
    <property type="entry name" value="Kelch motif"/>
    <property type="match status" value="1"/>
</dbReference>